<proteinExistence type="evidence at transcript level"/>
<accession>Q66J77</accession>
<sequence>MGPATGMTPDKNIESPTAEKVPGLSQTENMGSLPEEVGAARPKASMVDNGATDEELTNLNWLHESTNLLNNFSLGSEGVSAGSPLYDIEGDLSPSGCQTPEKLSASSKPPYSFSLLIYMAIEHSPNKCLPVKDIYSWILDRFPYFSTAPTGWKNSVRHNLSLNKYFQKVERSHGKVNGKGSLWCVDPEYKPSLIQALKKQPFSSALALYTPPTSPTSVSSRPYVLTSASRRKQIHYVKDSDIDAATAMMLLNSSIKEEALDRQKPQPLKVVLPKKRSYASAFKHCPPLSLQENDGEVINIDPKEDHNYSASGGDSQRCESRSSVSSLSSVEEVYEFIPKNSRTGSDGSEGFHSEDDTDIDYEEDTLGDNGYVPQPSGNDLHGSKLRKEASQDIDEELKEAAGSLLHLAGIRTCLDSLLKTAKAQSHKHRK</sequence>
<dbReference type="EMBL" id="BC081030">
    <property type="protein sequence ID" value="AAH81030.1"/>
    <property type="molecule type" value="mRNA"/>
</dbReference>
<dbReference type="SMR" id="Q66J77"/>
<dbReference type="DNASU" id="447464"/>
<dbReference type="KEGG" id="xla:447464"/>
<dbReference type="AGR" id="Xenbase:XB-GENE-952923"/>
<dbReference type="CTD" id="447464"/>
<dbReference type="Xenbase" id="XB-GENE-952923">
    <property type="gene designation" value="foxn2.S"/>
</dbReference>
<dbReference type="OrthoDB" id="5954824at2759"/>
<dbReference type="Proteomes" id="UP000186698">
    <property type="component" value="Chromosome 5S"/>
</dbReference>
<dbReference type="Bgee" id="447464">
    <property type="expression patterns" value="Expressed in blastula and 18 other cell types or tissues"/>
</dbReference>
<dbReference type="GO" id="GO:0005634">
    <property type="term" value="C:nucleus"/>
    <property type="evidence" value="ECO:0000318"/>
    <property type="project" value="GO_Central"/>
</dbReference>
<dbReference type="GO" id="GO:0000987">
    <property type="term" value="F:cis-regulatory region sequence-specific DNA binding"/>
    <property type="evidence" value="ECO:0000318"/>
    <property type="project" value="GO_Central"/>
</dbReference>
<dbReference type="GO" id="GO:0003700">
    <property type="term" value="F:DNA-binding transcription factor activity"/>
    <property type="evidence" value="ECO:0000318"/>
    <property type="project" value="GO_Central"/>
</dbReference>
<dbReference type="GO" id="GO:0006355">
    <property type="term" value="P:regulation of DNA-templated transcription"/>
    <property type="evidence" value="ECO:0000318"/>
    <property type="project" value="GO_Central"/>
</dbReference>
<dbReference type="CDD" id="cd20058">
    <property type="entry name" value="FH_FOXN2"/>
    <property type="match status" value="1"/>
</dbReference>
<dbReference type="Gene3D" id="1.10.10.10">
    <property type="entry name" value="Winged helix-like DNA-binding domain superfamily/Winged helix DNA-binding domain"/>
    <property type="match status" value="1"/>
</dbReference>
<dbReference type="InterPro" id="IPR047403">
    <property type="entry name" value="FH_FOXN2"/>
</dbReference>
<dbReference type="InterPro" id="IPR001766">
    <property type="entry name" value="Fork_head_dom"/>
</dbReference>
<dbReference type="InterPro" id="IPR047119">
    <property type="entry name" value="FOXN2/3-like"/>
</dbReference>
<dbReference type="InterPro" id="IPR018122">
    <property type="entry name" value="TF_fork_head_CS_1"/>
</dbReference>
<dbReference type="InterPro" id="IPR030456">
    <property type="entry name" value="TF_fork_head_CS_2"/>
</dbReference>
<dbReference type="InterPro" id="IPR036388">
    <property type="entry name" value="WH-like_DNA-bd_sf"/>
</dbReference>
<dbReference type="InterPro" id="IPR036390">
    <property type="entry name" value="WH_DNA-bd_sf"/>
</dbReference>
<dbReference type="PANTHER" id="PTHR13962:SF19">
    <property type="entry name" value="FORKHEAD BOX PROTEIN N2"/>
    <property type="match status" value="1"/>
</dbReference>
<dbReference type="PANTHER" id="PTHR13962">
    <property type="entry name" value="FORKHEAD BOX PROTEIN N3-LIKE PROTEIN-RELATED"/>
    <property type="match status" value="1"/>
</dbReference>
<dbReference type="Pfam" id="PF00250">
    <property type="entry name" value="Forkhead"/>
    <property type="match status" value="1"/>
</dbReference>
<dbReference type="PRINTS" id="PR00053">
    <property type="entry name" value="FORKHEAD"/>
</dbReference>
<dbReference type="SMART" id="SM00339">
    <property type="entry name" value="FH"/>
    <property type="match status" value="1"/>
</dbReference>
<dbReference type="SUPFAM" id="SSF46785">
    <property type="entry name" value="Winged helix' DNA-binding domain"/>
    <property type="match status" value="1"/>
</dbReference>
<dbReference type="PROSITE" id="PS00657">
    <property type="entry name" value="FORK_HEAD_1"/>
    <property type="match status" value="1"/>
</dbReference>
<dbReference type="PROSITE" id="PS00658">
    <property type="entry name" value="FORK_HEAD_2"/>
    <property type="match status" value="1"/>
</dbReference>
<dbReference type="PROSITE" id="PS50039">
    <property type="entry name" value="FORK_HEAD_3"/>
    <property type="match status" value="1"/>
</dbReference>
<reference evidence="6" key="1">
    <citation type="submission" date="2004-08" db="EMBL/GenBank/DDBJ databases">
        <authorList>
            <consortium name="NIH - Xenopus Gene Collection (XGC) project"/>
        </authorList>
    </citation>
    <scope>NUCLEOTIDE SEQUENCE [LARGE SCALE MRNA]</scope>
    <source>
        <tissue evidence="6">Embryo</tissue>
    </source>
</reference>
<reference evidence="5" key="2">
    <citation type="journal article" date="2006" name="Int. J. Dev. Biol.">
        <title>Temporal and spatial expression patterns of FoxN genes in Xenopus laevis embryos.</title>
        <authorList>
            <person name="Schuff M."/>
            <person name="Roessner A."/>
            <person name="Donow C."/>
            <person name="Knoechel W."/>
        </authorList>
    </citation>
    <scope>TISSUE SPECIFICITY</scope>
    <scope>DEVELOPMENTAL STAGE</scope>
</reference>
<feature type="chain" id="PRO_0000247732" description="Forkhead box protein N2">
    <location>
        <begin position="1"/>
        <end position="430"/>
    </location>
</feature>
<feature type="DNA-binding region" description="Fork-head" evidence="1">
    <location>
        <begin position="108"/>
        <end position="204"/>
    </location>
</feature>
<feature type="region of interest" description="Disordered" evidence="2">
    <location>
        <begin position="1"/>
        <end position="47"/>
    </location>
</feature>
<feature type="region of interest" description="Disordered" evidence="2">
    <location>
        <begin position="299"/>
        <end position="326"/>
    </location>
</feature>
<feature type="region of interest" description="Disordered" evidence="2">
    <location>
        <begin position="338"/>
        <end position="391"/>
    </location>
</feature>
<feature type="compositionally biased region" description="Acidic residues" evidence="2">
    <location>
        <begin position="355"/>
        <end position="366"/>
    </location>
</feature>
<feature type="compositionally biased region" description="Basic and acidic residues" evidence="2">
    <location>
        <begin position="381"/>
        <end position="390"/>
    </location>
</feature>
<organism>
    <name type="scientific">Xenopus laevis</name>
    <name type="common">African clawed frog</name>
    <dbReference type="NCBI Taxonomy" id="8355"/>
    <lineage>
        <taxon>Eukaryota</taxon>
        <taxon>Metazoa</taxon>
        <taxon>Chordata</taxon>
        <taxon>Craniata</taxon>
        <taxon>Vertebrata</taxon>
        <taxon>Euteleostomi</taxon>
        <taxon>Amphibia</taxon>
        <taxon>Batrachia</taxon>
        <taxon>Anura</taxon>
        <taxon>Pipoidea</taxon>
        <taxon>Pipidae</taxon>
        <taxon>Xenopodinae</taxon>
        <taxon>Xenopus</taxon>
        <taxon>Xenopus</taxon>
    </lineage>
</organism>
<comment type="subcellular location">
    <subcellularLocation>
        <location evidence="5">Nucleus</location>
    </subcellularLocation>
</comment>
<comment type="tissue specificity">
    <text evidence="3">Expressed in the developing eye from stage 23. Localized to the prospective retinal layer and a layer of cells lateral to the ventricular zone. At stage 29, expression extends to the branchial arches and the brain. At stage 33/34, expressed in the vagal ganglion. At stage 36, expression in the retina decreases. Not expressed in the eye lens.</text>
</comment>
<comment type="developmental stage">
    <text evidence="3">Expressed both maternally and zygotically. Present in all embryonic stages including early cleavage stages, with levels decreasing slightly during gastrulation and neurulation (stages 10-20). Levels then increase at stage 30 and expression persists until stage 45.</text>
</comment>
<evidence type="ECO:0000255" key="1">
    <source>
        <dbReference type="PROSITE-ProRule" id="PRU00089"/>
    </source>
</evidence>
<evidence type="ECO:0000256" key="2">
    <source>
        <dbReference type="SAM" id="MobiDB-lite"/>
    </source>
</evidence>
<evidence type="ECO:0000269" key="3">
    <source>
    </source>
</evidence>
<evidence type="ECO:0000303" key="4">
    <source>
    </source>
</evidence>
<evidence type="ECO:0000305" key="5"/>
<evidence type="ECO:0000312" key="6">
    <source>
        <dbReference type="EMBL" id="AAH81030.1"/>
    </source>
</evidence>
<protein>
    <recommendedName>
        <fullName>Forkhead box protein N2</fullName>
    </recommendedName>
</protein>
<keyword id="KW-0238">DNA-binding</keyword>
<keyword id="KW-0539">Nucleus</keyword>
<keyword id="KW-1185">Reference proteome</keyword>
<keyword id="KW-0804">Transcription</keyword>
<keyword id="KW-0805">Transcription regulation</keyword>
<gene>
    <name evidence="4" type="primary">foxn2</name>
</gene>
<name>FOXN2_XENLA</name>